<organism>
    <name type="scientific">Xanthomonas oryzae pv. oryzae (strain MAFF 311018)</name>
    <dbReference type="NCBI Taxonomy" id="342109"/>
    <lineage>
        <taxon>Bacteria</taxon>
        <taxon>Pseudomonadati</taxon>
        <taxon>Pseudomonadota</taxon>
        <taxon>Gammaproteobacteria</taxon>
        <taxon>Lysobacterales</taxon>
        <taxon>Lysobacteraceae</taxon>
        <taxon>Xanthomonas</taxon>
    </lineage>
</organism>
<keyword id="KW-0963">Cytoplasm</keyword>
<keyword id="KW-0489">Methyltransferase</keyword>
<keyword id="KW-0698">rRNA processing</keyword>
<keyword id="KW-0949">S-adenosyl-L-methionine</keyword>
<keyword id="KW-0808">Transferase</keyword>
<sequence length="347" mass="38930">MSGLLCYCRQGFEPELAAELSARAAFVGIAGYARTQRNDGYVLFVCDEAAQLAAKLQWRELIFARQKLVVIAELKGIDPKDRITPILAALEGQQRFGDLWVEHPDSDAGKPLASLARSFGNALRPALRKAGLLTDKPQPRQPRLHICFLDGDHALLAVADSADSAPWPLGIPRLKLLPEAPSRSALKLDEALLTLLTPEEREALVKPGMRAADLGAAPGGWTWVLTRQHVHVTSVDNGPLRAHVLETGLVEHLRADGFHWKPAQPLDWMVCDMVEQPRRVAERMATWVREGWCRNTIFNLKLPMKKRWDETRLCLELFEQQAEKSLIVRAKQLYHDREEITVLAMRG</sequence>
<reference key="1">
    <citation type="journal article" date="2005" name="Jpn. Agric. Res. Q.">
        <title>Genome sequence of Xanthomonas oryzae pv. oryzae suggests contribution of large numbers of effector genes and insertion sequences to its race diversity.</title>
        <authorList>
            <person name="Ochiai H."/>
            <person name="Inoue Y."/>
            <person name="Takeya M."/>
            <person name="Sasaki A."/>
            <person name="Kaku H."/>
        </authorList>
    </citation>
    <scope>NUCLEOTIDE SEQUENCE [LARGE SCALE GENOMIC DNA]</scope>
    <source>
        <strain>MAFF 311018</strain>
    </source>
</reference>
<name>RLMM_XANOM</name>
<comment type="function">
    <text evidence="1">Catalyzes the 2'-O-methylation at nucleotide C2498 in 23S rRNA.</text>
</comment>
<comment type="catalytic activity">
    <reaction evidence="1">
        <text>cytidine(2498) in 23S rRNA + S-adenosyl-L-methionine = 2'-O-methylcytidine(2498) in 23S rRNA + S-adenosyl-L-homocysteine + H(+)</text>
        <dbReference type="Rhea" id="RHEA:42788"/>
        <dbReference type="Rhea" id="RHEA-COMP:10244"/>
        <dbReference type="Rhea" id="RHEA-COMP:10245"/>
        <dbReference type="ChEBI" id="CHEBI:15378"/>
        <dbReference type="ChEBI" id="CHEBI:57856"/>
        <dbReference type="ChEBI" id="CHEBI:59789"/>
        <dbReference type="ChEBI" id="CHEBI:74495"/>
        <dbReference type="ChEBI" id="CHEBI:82748"/>
        <dbReference type="EC" id="2.1.1.186"/>
    </reaction>
</comment>
<comment type="subunit">
    <text evidence="1">Monomer.</text>
</comment>
<comment type="subcellular location">
    <subcellularLocation>
        <location evidence="1">Cytoplasm</location>
    </subcellularLocation>
</comment>
<comment type="similarity">
    <text evidence="1">Belongs to the class I-like SAM-binding methyltransferase superfamily. RNA methyltransferase RlmE family. RlmM subfamily.</text>
</comment>
<dbReference type="EC" id="2.1.1.186" evidence="1"/>
<dbReference type="EMBL" id="AP008229">
    <property type="protein sequence ID" value="BAE70269.1"/>
    <property type="molecule type" value="Genomic_DNA"/>
</dbReference>
<dbReference type="RefSeq" id="WP_011409319.1">
    <property type="nucleotide sequence ID" value="NC_007705.1"/>
</dbReference>
<dbReference type="SMR" id="Q2NZK8"/>
<dbReference type="KEGG" id="xom:XOO3514"/>
<dbReference type="HOGENOM" id="CLU_043780_0_0_6"/>
<dbReference type="GO" id="GO:0005737">
    <property type="term" value="C:cytoplasm"/>
    <property type="evidence" value="ECO:0007669"/>
    <property type="project" value="UniProtKB-SubCell"/>
</dbReference>
<dbReference type="GO" id="GO:0008757">
    <property type="term" value="F:S-adenosylmethionine-dependent methyltransferase activity"/>
    <property type="evidence" value="ECO:0007669"/>
    <property type="project" value="UniProtKB-UniRule"/>
</dbReference>
<dbReference type="GO" id="GO:0032259">
    <property type="term" value="P:methylation"/>
    <property type="evidence" value="ECO:0007669"/>
    <property type="project" value="UniProtKB-KW"/>
</dbReference>
<dbReference type="GO" id="GO:0006364">
    <property type="term" value="P:rRNA processing"/>
    <property type="evidence" value="ECO:0007669"/>
    <property type="project" value="UniProtKB-UniRule"/>
</dbReference>
<dbReference type="Gene3D" id="3.30.2300.20">
    <property type="match status" value="1"/>
</dbReference>
<dbReference type="Gene3D" id="3.30.70.2810">
    <property type="match status" value="1"/>
</dbReference>
<dbReference type="Gene3D" id="3.40.50.150">
    <property type="entry name" value="Vaccinia Virus protein VP39"/>
    <property type="match status" value="1"/>
</dbReference>
<dbReference type="HAMAP" id="MF_01551">
    <property type="entry name" value="23SrRNA_methyltr_M"/>
    <property type="match status" value="1"/>
</dbReference>
<dbReference type="InterPro" id="IPR040739">
    <property type="entry name" value="RlmM_FDX"/>
</dbReference>
<dbReference type="InterPro" id="IPR048646">
    <property type="entry name" value="RlmM_THUMP-like"/>
</dbReference>
<dbReference type="InterPro" id="IPR002877">
    <property type="entry name" value="RNA_MeTrfase_FtsJ_dom"/>
</dbReference>
<dbReference type="InterPro" id="IPR011224">
    <property type="entry name" value="rRNA_MeTrfase_M"/>
</dbReference>
<dbReference type="InterPro" id="IPR029063">
    <property type="entry name" value="SAM-dependent_MTases_sf"/>
</dbReference>
<dbReference type="NCBIfam" id="NF008734">
    <property type="entry name" value="PRK11760.1"/>
    <property type="match status" value="1"/>
</dbReference>
<dbReference type="PANTHER" id="PTHR37524">
    <property type="entry name" value="RIBOSOMAL RNA LARGE SUBUNIT METHYLTRANSFERASE M"/>
    <property type="match status" value="1"/>
</dbReference>
<dbReference type="PANTHER" id="PTHR37524:SF2">
    <property type="entry name" value="RIBOSOMAL RNA METHYLTRANSFERASE FTSJ DOMAIN-CONTAINING PROTEIN"/>
    <property type="match status" value="1"/>
</dbReference>
<dbReference type="Pfam" id="PF01728">
    <property type="entry name" value="FtsJ"/>
    <property type="match status" value="1"/>
</dbReference>
<dbReference type="Pfam" id="PF18125">
    <property type="entry name" value="RlmM_FDX"/>
    <property type="match status" value="1"/>
</dbReference>
<dbReference type="Pfam" id="PF21239">
    <property type="entry name" value="RLMM_N"/>
    <property type="match status" value="1"/>
</dbReference>
<dbReference type="PIRSF" id="PIRSF028774">
    <property type="entry name" value="UCP028774"/>
    <property type="match status" value="1"/>
</dbReference>
<dbReference type="SUPFAM" id="SSF53335">
    <property type="entry name" value="S-adenosyl-L-methionine-dependent methyltransferases"/>
    <property type="match status" value="1"/>
</dbReference>
<protein>
    <recommendedName>
        <fullName evidence="1">Ribosomal RNA large subunit methyltransferase M</fullName>
        <ecNumber evidence="1">2.1.1.186</ecNumber>
    </recommendedName>
    <alternativeName>
        <fullName evidence="1">23S rRNA (cytidine2498-2'-O)-methyltransferase</fullName>
    </alternativeName>
    <alternativeName>
        <fullName evidence="1">23S rRNA 2'-O-ribose methyltransferase RlmM</fullName>
    </alternativeName>
</protein>
<gene>
    <name evidence="1" type="primary">rlmM</name>
    <name type="ordered locus">XOO3514</name>
</gene>
<evidence type="ECO:0000255" key="1">
    <source>
        <dbReference type="HAMAP-Rule" id="MF_01551"/>
    </source>
</evidence>
<accession>Q2NZK8</accession>
<proteinExistence type="inferred from homology"/>
<feature type="chain" id="PRO_0000314550" description="Ribosomal RNA large subunit methyltransferase M">
    <location>
        <begin position="1"/>
        <end position="347"/>
    </location>
</feature>
<feature type="active site" description="Proton acceptor" evidence="1">
    <location>
        <position position="301"/>
    </location>
</feature>
<feature type="binding site" evidence="1">
    <location>
        <position position="184"/>
    </location>
    <ligand>
        <name>S-adenosyl-L-methionine</name>
        <dbReference type="ChEBI" id="CHEBI:59789"/>
    </ligand>
</feature>
<feature type="binding site" evidence="1">
    <location>
        <begin position="217"/>
        <end position="220"/>
    </location>
    <ligand>
        <name>S-adenosyl-L-methionine</name>
        <dbReference type="ChEBI" id="CHEBI:59789"/>
    </ligand>
</feature>
<feature type="binding site" evidence="1">
    <location>
        <position position="236"/>
    </location>
    <ligand>
        <name>S-adenosyl-L-methionine</name>
        <dbReference type="ChEBI" id="CHEBI:59789"/>
    </ligand>
</feature>
<feature type="binding site" evidence="1">
    <location>
        <position position="256"/>
    </location>
    <ligand>
        <name>S-adenosyl-L-methionine</name>
        <dbReference type="ChEBI" id="CHEBI:59789"/>
    </ligand>
</feature>
<feature type="binding site" evidence="1">
    <location>
        <position position="272"/>
    </location>
    <ligand>
        <name>S-adenosyl-L-methionine</name>
        <dbReference type="ChEBI" id="CHEBI:59789"/>
    </ligand>
</feature>